<evidence type="ECO:0000255" key="1">
    <source>
        <dbReference type="HAMAP-Rule" id="MF_00113"/>
    </source>
</evidence>
<evidence type="ECO:0000256" key="2">
    <source>
        <dbReference type="SAM" id="MobiDB-lite"/>
    </source>
</evidence>
<gene>
    <name evidence="1" type="primary">queA</name>
    <name type="ordered locus">Rleg2_1751</name>
</gene>
<reference key="1">
    <citation type="journal article" date="2010" name="Stand. Genomic Sci.">
        <title>Complete genome sequence of Rhizobium leguminosarum bv trifolii strain WSM2304, an effective microsymbiont of the South American clover Trifolium polymorphum.</title>
        <authorList>
            <person name="Reeve W."/>
            <person name="O'Hara G."/>
            <person name="Chain P."/>
            <person name="Ardley J."/>
            <person name="Brau L."/>
            <person name="Nandesena K."/>
            <person name="Tiwari R."/>
            <person name="Malfatti S."/>
            <person name="Kiss H."/>
            <person name="Lapidus A."/>
            <person name="Copeland A."/>
            <person name="Nolan M."/>
            <person name="Land M."/>
            <person name="Ivanova N."/>
            <person name="Mavromatis K."/>
            <person name="Markowitz V."/>
            <person name="Kyrpides N."/>
            <person name="Melino V."/>
            <person name="Denton M."/>
            <person name="Yates R."/>
            <person name="Howieson J."/>
        </authorList>
    </citation>
    <scope>NUCLEOTIDE SEQUENCE [LARGE SCALE GENOMIC DNA]</scope>
    <source>
        <strain>WSM2304</strain>
    </source>
</reference>
<sequence>MRVDLFDFDLPDERIALRPAEPRDSARLLVVNPHAESRPHAESVPHAESRPHAESAFSDHRVGDLPSFLRAGDALVFNDTKVIPAQLEGIRHRDGAGGQQVSATLHMRVGPSRWKAFAKPGKRIKEGDRIAFGHSGESCLLGSLDATVEEKGEAGEVTLAFDLSGPALDEAIAAVGHIPLPPYIAAKRPEDERDRADYQTIYAREEGAVAAPTAGLHFTPALFEALDRAGIERHFVTLHVGAGTFLPVKADDTADHKMHLESGTVSAETAARLNAVKARGGRIVCVGTTSLRLIESAAEESGEIRGWSGATGIFITPGYRFKAVDMLMTNFHLPRSTLFMLVSAFSGFETMHAAYKHAISTGYRFYSYGDASLLFRKDK</sequence>
<feature type="chain" id="PRO_1000094807" description="S-adenosylmethionine:tRNA ribosyltransferase-isomerase">
    <location>
        <begin position="1"/>
        <end position="379"/>
    </location>
</feature>
<feature type="region of interest" description="Disordered" evidence="2">
    <location>
        <begin position="35"/>
        <end position="58"/>
    </location>
</feature>
<proteinExistence type="inferred from homology"/>
<organism>
    <name type="scientific">Rhizobium leguminosarum bv. trifolii (strain WSM2304)</name>
    <dbReference type="NCBI Taxonomy" id="395492"/>
    <lineage>
        <taxon>Bacteria</taxon>
        <taxon>Pseudomonadati</taxon>
        <taxon>Pseudomonadota</taxon>
        <taxon>Alphaproteobacteria</taxon>
        <taxon>Hyphomicrobiales</taxon>
        <taxon>Rhizobiaceae</taxon>
        <taxon>Rhizobium/Agrobacterium group</taxon>
        <taxon>Rhizobium</taxon>
    </lineage>
</organism>
<dbReference type="EC" id="2.4.99.17" evidence="1"/>
<dbReference type="EMBL" id="CP001191">
    <property type="protein sequence ID" value="ACI55038.1"/>
    <property type="molecule type" value="Genomic_DNA"/>
</dbReference>
<dbReference type="RefSeq" id="WP_012557667.1">
    <property type="nucleotide sequence ID" value="NC_011369.1"/>
</dbReference>
<dbReference type="SMR" id="B5ZPR8"/>
<dbReference type="STRING" id="395492.Rleg2_1751"/>
<dbReference type="KEGG" id="rlt:Rleg2_1751"/>
<dbReference type="eggNOG" id="COG0809">
    <property type="taxonomic scope" value="Bacteria"/>
</dbReference>
<dbReference type="HOGENOM" id="CLU_039110_1_1_5"/>
<dbReference type="UniPathway" id="UPA00392"/>
<dbReference type="Proteomes" id="UP000008330">
    <property type="component" value="Chromosome"/>
</dbReference>
<dbReference type="GO" id="GO:0005737">
    <property type="term" value="C:cytoplasm"/>
    <property type="evidence" value="ECO:0007669"/>
    <property type="project" value="UniProtKB-SubCell"/>
</dbReference>
<dbReference type="GO" id="GO:0051075">
    <property type="term" value="F:S-adenosylmethionine:tRNA ribosyltransferase-isomerase activity"/>
    <property type="evidence" value="ECO:0007669"/>
    <property type="project" value="UniProtKB-EC"/>
</dbReference>
<dbReference type="GO" id="GO:0008616">
    <property type="term" value="P:queuosine biosynthetic process"/>
    <property type="evidence" value="ECO:0007669"/>
    <property type="project" value="UniProtKB-UniRule"/>
</dbReference>
<dbReference type="GO" id="GO:0002099">
    <property type="term" value="P:tRNA wobble guanine modification"/>
    <property type="evidence" value="ECO:0007669"/>
    <property type="project" value="TreeGrafter"/>
</dbReference>
<dbReference type="FunFam" id="3.40.1780.10:FF:000001">
    <property type="entry name" value="S-adenosylmethionine:tRNA ribosyltransferase-isomerase"/>
    <property type="match status" value="1"/>
</dbReference>
<dbReference type="Gene3D" id="2.40.10.240">
    <property type="entry name" value="QueA-like"/>
    <property type="match status" value="1"/>
</dbReference>
<dbReference type="Gene3D" id="3.40.1780.10">
    <property type="entry name" value="QueA-like"/>
    <property type="match status" value="1"/>
</dbReference>
<dbReference type="HAMAP" id="MF_00113">
    <property type="entry name" value="QueA"/>
    <property type="match status" value="1"/>
</dbReference>
<dbReference type="InterPro" id="IPR003699">
    <property type="entry name" value="QueA"/>
</dbReference>
<dbReference type="InterPro" id="IPR042118">
    <property type="entry name" value="QueA_dom1"/>
</dbReference>
<dbReference type="InterPro" id="IPR042119">
    <property type="entry name" value="QueA_dom2"/>
</dbReference>
<dbReference type="InterPro" id="IPR036100">
    <property type="entry name" value="QueA_sf"/>
</dbReference>
<dbReference type="NCBIfam" id="NF001140">
    <property type="entry name" value="PRK00147.1"/>
    <property type="match status" value="1"/>
</dbReference>
<dbReference type="NCBIfam" id="TIGR00113">
    <property type="entry name" value="queA"/>
    <property type="match status" value="1"/>
</dbReference>
<dbReference type="PANTHER" id="PTHR30307">
    <property type="entry name" value="S-ADENOSYLMETHIONINE:TRNA RIBOSYLTRANSFERASE-ISOMERASE"/>
    <property type="match status" value="1"/>
</dbReference>
<dbReference type="PANTHER" id="PTHR30307:SF0">
    <property type="entry name" value="S-ADENOSYLMETHIONINE:TRNA RIBOSYLTRANSFERASE-ISOMERASE"/>
    <property type="match status" value="1"/>
</dbReference>
<dbReference type="Pfam" id="PF02547">
    <property type="entry name" value="Queuosine_synth"/>
    <property type="match status" value="1"/>
</dbReference>
<dbReference type="SUPFAM" id="SSF111337">
    <property type="entry name" value="QueA-like"/>
    <property type="match status" value="1"/>
</dbReference>
<accession>B5ZPR8</accession>
<name>QUEA_RHILW</name>
<keyword id="KW-0963">Cytoplasm</keyword>
<keyword id="KW-0671">Queuosine biosynthesis</keyword>
<keyword id="KW-1185">Reference proteome</keyword>
<keyword id="KW-0949">S-adenosyl-L-methionine</keyword>
<keyword id="KW-0808">Transferase</keyword>
<protein>
    <recommendedName>
        <fullName evidence="1">S-adenosylmethionine:tRNA ribosyltransferase-isomerase</fullName>
        <ecNumber evidence="1">2.4.99.17</ecNumber>
    </recommendedName>
    <alternativeName>
        <fullName evidence="1">Queuosine biosynthesis protein QueA</fullName>
    </alternativeName>
</protein>
<comment type="function">
    <text evidence="1">Transfers and isomerizes the ribose moiety from AdoMet to the 7-aminomethyl group of 7-deazaguanine (preQ1-tRNA) to give epoxyqueuosine (oQ-tRNA).</text>
</comment>
<comment type="catalytic activity">
    <reaction evidence="1">
        <text>7-aminomethyl-7-carbaguanosine(34) in tRNA + S-adenosyl-L-methionine = epoxyqueuosine(34) in tRNA + adenine + L-methionine + 2 H(+)</text>
        <dbReference type="Rhea" id="RHEA:32155"/>
        <dbReference type="Rhea" id="RHEA-COMP:10342"/>
        <dbReference type="Rhea" id="RHEA-COMP:18582"/>
        <dbReference type="ChEBI" id="CHEBI:15378"/>
        <dbReference type="ChEBI" id="CHEBI:16708"/>
        <dbReference type="ChEBI" id="CHEBI:57844"/>
        <dbReference type="ChEBI" id="CHEBI:59789"/>
        <dbReference type="ChEBI" id="CHEBI:82833"/>
        <dbReference type="ChEBI" id="CHEBI:194443"/>
        <dbReference type="EC" id="2.4.99.17"/>
    </reaction>
</comment>
<comment type="pathway">
    <text evidence="1">tRNA modification; tRNA-queuosine biosynthesis.</text>
</comment>
<comment type="subunit">
    <text evidence="1">Monomer.</text>
</comment>
<comment type="subcellular location">
    <subcellularLocation>
        <location evidence="1">Cytoplasm</location>
    </subcellularLocation>
</comment>
<comment type="similarity">
    <text evidence="1">Belongs to the QueA family.</text>
</comment>